<dbReference type="EC" id="3.5.4.2" evidence="1"/>
<dbReference type="EMBL" id="CU928162">
    <property type="protein sequence ID" value="CAR10344.1"/>
    <property type="molecule type" value="Genomic_DNA"/>
</dbReference>
<dbReference type="SMR" id="B7N1X4"/>
<dbReference type="KEGG" id="ecq:ECED1_4360"/>
<dbReference type="HOGENOM" id="CLU_027935_0_0_6"/>
<dbReference type="Proteomes" id="UP000000748">
    <property type="component" value="Chromosome"/>
</dbReference>
<dbReference type="GO" id="GO:0000034">
    <property type="term" value="F:adenine deaminase activity"/>
    <property type="evidence" value="ECO:0007669"/>
    <property type="project" value="UniProtKB-UniRule"/>
</dbReference>
<dbReference type="GO" id="GO:0006146">
    <property type="term" value="P:adenine catabolic process"/>
    <property type="evidence" value="ECO:0007669"/>
    <property type="project" value="InterPro"/>
</dbReference>
<dbReference type="CDD" id="cd01295">
    <property type="entry name" value="AdeC"/>
    <property type="match status" value="1"/>
</dbReference>
<dbReference type="FunFam" id="3.20.20.140:FF:000016">
    <property type="entry name" value="Adenine deaminase"/>
    <property type="match status" value="1"/>
</dbReference>
<dbReference type="Gene3D" id="3.20.20.140">
    <property type="entry name" value="Metal-dependent hydrolases"/>
    <property type="match status" value="1"/>
</dbReference>
<dbReference type="Gene3D" id="2.30.40.10">
    <property type="entry name" value="Urease, subunit C, domain 1"/>
    <property type="match status" value="1"/>
</dbReference>
<dbReference type="HAMAP" id="MF_01518">
    <property type="entry name" value="Adenine_deamin"/>
    <property type="match status" value="1"/>
</dbReference>
<dbReference type="InterPro" id="IPR006679">
    <property type="entry name" value="Adenine_deam"/>
</dbReference>
<dbReference type="InterPro" id="IPR026912">
    <property type="entry name" value="Adenine_deam_C"/>
</dbReference>
<dbReference type="InterPro" id="IPR006680">
    <property type="entry name" value="Amidohydro-rel"/>
</dbReference>
<dbReference type="InterPro" id="IPR011059">
    <property type="entry name" value="Metal-dep_hydrolase_composite"/>
</dbReference>
<dbReference type="InterPro" id="IPR032466">
    <property type="entry name" value="Metal_Hydrolase"/>
</dbReference>
<dbReference type="NCBIfam" id="TIGR01178">
    <property type="entry name" value="ade"/>
    <property type="match status" value="1"/>
</dbReference>
<dbReference type="NCBIfam" id="NF007457">
    <property type="entry name" value="PRK10027.1"/>
    <property type="match status" value="1"/>
</dbReference>
<dbReference type="PANTHER" id="PTHR11113:SF2">
    <property type="entry name" value="ADENINE DEAMINASE"/>
    <property type="match status" value="1"/>
</dbReference>
<dbReference type="PANTHER" id="PTHR11113">
    <property type="entry name" value="N-ACETYLGLUCOSAMINE-6-PHOSPHATE DEACETYLASE"/>
    <property type="match status" value="1"/>
</dbReference>
<dbReference type="Pfam" id="PF13382">
    <property type="entry name" value="Adenine_deam_C"/>
    <property type="match status" value="1"/>
</dbReference>
<dbReference type="Pfam" id="PF01979">
    <property type="entry name" value="Amidohydro_1"/>
    <property type="match status" value="1"/>
</dbReference>
<dbReference type="SUPFAM" id="SSF51338">
    <property type="entry name" value="Composite domain of metallo-dependent hydrolases"/>
    <property type="match status" value="1"/>
</dbReference>
<dbReference type="SUPFAM" id="SSF51556">
    <property type="entry name" value="Metallo-dependent hydrolases"/>
    <property type="match status" value="1"/>
</dbReference>
<protein>
    <recommendedName>
        <fullName evidence="1">Adenine deaminase</fullName>
        <shortName evidence="1">Adenase</shortName>
        <shortName evidence="1">Adenine aminase</shortName>
        <ecNumber evidence="1">3.5.4.2</ecNumber>
    </recommendedName>
</protein>
<organism>
    <name type="scientific">Escherichia coli O81 (strain ED1a)</name>
    <dbReference type="NCBI Taxonomy" id="585397"/>
    <lineage>
        <taxon>Bacteria</taxon>
        <taxon>Pseudomonadati</taxon>
        <taxon>Pseudomonadota</taxon>
        <taxon>Gammaproteobacteria</taxon>
        <taxon>Enterobacterales</taxon>
        <taxon>Enterobacteriaceae</taxon>
        <taxon>Escherichia</taxon>
    </lineage>
</organism>
<feature type="chain" id="PRO_1000185088" description="Adenine deaminase">
    <location>
        <begin position="1"/>
        <end position="588"/>
    </location>
</feature>
<evidence type="ECO:0000255" key="1">
    <source>
        <dbReference type="HAMAP-Rule" id="MF_01518"/>
    </source>
</evidence>
<name>ADEC_ECO81</name>
<accession>B7N1X4</accession>
<comment type="catalytic activity">
    <reaction evidence="1">
        <text>adenine + H2O + H(+) = hypoxanthine + NH4(+)</text>
        <dbReference type="Rhea" id="RHEA:23688"/>
        <dbReference type="ChEBI" id="CHEBI:15377"/>
        <dbReference type="ChEBI" id="CHEBI:15378"/>
        <dbReference type="ChEBI" id="CHEBI:16708"/>
        <dbReference type="ChEBI" id="CHEBI:17368"/>
        <dbReference type="ChEBI" id="CHEBI:28938"/>
        <dbReference type="EC" id="3.5.4.2"/>
    </reaction>
</comment>
<comment type="cofactor">
    <cofactor evidence="1">
        <name>Mn(2+)</name>
        <dbReference type="ChEBI" id="CHEBI:29035"/>
    </cofactor>
</comment>
<comment type="subunit">
    <text evidence="1">Homodimer.</text>
</comment>
<comment type="similarity">
    <text evidence="1">Belongs to the metallo-dependent hydrolases superfamily. Adenine deaminase family.</text>
</comment>
<proteinExistence type="inferred from homology"/>
<reference key="1">
    <citation type="journal article" date="2009" name="PLoS Genet.">
        <title>Organised genome dynamics in the Escherichia coli species results in highly diverse adaptive paths.</title>
        <authorList>
            <person name="Touchon M."/>
            <person name="Hoede C."/>
            <person name="Tenaillon O."/>
            <person name="Barbe V."/>
            <person name="Baeriswyl S."/>
            <person name="Bidet P."/>
            <person name="Bingen E."/>
            <person name="Bonacorsi S."/>
            <person name="Bouchier C."/>
            <person name="Bouvet O."/>
            <person name="Calteau A."/>
            <person name="Chiapello H."/>
            <person name="Clermont O."/>
            <person name="Cruveiller S."/>
            <person name="Danchin A."/>
            <person name="Diard M."/>
            <person name="Dossat C."/>
            <person name="Karoui M.E."/>
            <person name="Frapy E."/>
            <person name="Garry L."/>
            <person name="Ghigo J.M."/>
            <person name="Gilles A.M."/>
            <person name="Johnson J."/>
            <person name="Le Bouguenec C."/>
            <person name="Lescat M."/>
            <person name="Mangenot S."/>
            <person name="Martinez-Jehanne V."/>
            <person name="Matic I."/>
            <person name="Nassif X."/>
            <person name="Oztas S."/>
            <person name="Petit M.A."/>
            <person name="Pichon C."/>
            <person name="Rouy Z."/>
            <person name="Ruf C.S."/>
            <person name="Schneider D."/>
            <person name="Tourret J."/>
            <person name="Vacherie B."/>
            <person name="Vallenet D."/>
            <person name="Medigue C."/>
            <person name="Rocha E.P.C."/>
            <person name="Denamur E."/>
        </authorList>
    </citation>
    <scope>NUCLEOTIDE SEQUENCE [LARGE SCALE GENOMIC DNA]</scope>
    <source>
        <strain>ED1a</strain>
    </source>
</reference>
<gene>
    <name evidence="1" type="primary">ade</name>
    <name type="ordered locus">ECED1_4360</name>
</gene>
<sequence>MNNSINHKFHHISRAEYQELLAVSRGDAVADYIIDNVSILDLINGGEISGPIVIKGRYIAGVGAEYADAPALQRIDARGATAVPGFIDAHLHIESSMMTPVTFETATLPRGLTTVICDPHEIVNVMGEAGFAWFARCAEQARQNQYLQVSSCVPALEGCDVNGASFTLEQMLAWRDHPQVTGLAEMMDYPGVISGQNALLDKLDAFRHLTLDGHCPGLGGKELNAYIAAGIENCHESYQLEEGRRKLQLGMSLMIREGSAARNLNALAPLINEFNSPQCMLCTDDRNPWEIAHEGHIDALIRRLIEQHNVPLHVAYRVASWSTARHFGLNHLGLLAPGKQADIVLLSDARKVTVQQVLVKGEPIDAQTLQAEESARLAQSAPPYGNTIDRQPVSASDFALQFTPGKRYRVIEVIHNELITHSRSSVYSENGFDRDDVCFIAVLERYGQRLAPACGLLGGFGLNEGALAATVSHDSHNIVVIGRSAEEMALAVNQVIQDGGGLCVVRNGQVQSHLPLPIAGLMSTDTAQSLAEQIDALKAAARECGPLPDEPFIQMAFLSLPVIPALKLTSQGLFDGEKFAFTTLEVTE</sequence>
<keyword id="KW-0378">Hydrolase</keyword>
<keyword id="KW-0464">Manganese</keyword>